<accession>P84157</accession>
<accession>Q0P5W3</accession>
<comment type="subcellular location">
    <subcellularLocation>
        <location evidence="6">Membrane</location>
        <topology evidence="6">Single-pass membrane protein</topology>
    </subcellularLocation>
</comment>
<comment type="alternative products">
    <event type="alternative splicing"/>
    <isoform>
        <id>P84157-1</id>
        <name>1</name>
        <sequence type="displayed"/>
    </isoform>
    <isoform>
        <id>P84157-2</id>
        <name>2</name>
        <sequence type="described" ref="VSP_022589 VSP_022590"/>
    </isoform>
    <isoform>
        <id>P84157-3</id>
        <name>3</name>
        <sequence type="described" ref="VSP_024252"/>
    </isoform>
</comment>
<comment type="sequence caution" evidence="6">
    <conflict type="frameshift">
        <sequence resource="EMBL" id="AW888225"/>
    </conflict>
</comment>
<dbReference type="EMBL" id="AC005837">
    <property type="status" value="NOT_ANNOTATED_CDS"/>
    <property type="molecule type" value="Genomic_DNA"/>
</dbReference>
<dbReference type="EMBL" id="BC053983">
    <property type="protein sequence ID" value="AAH53983.1"/>
    <property type="molecule type" value="mRNA"/>
</dbReference>
<dbReference type="EMBL" id="AW888225">
    <property type="status" value="NOT_ANNOTATED_CDS"/>
    <property type="molecule type" value="mRNA"/>
</dbReference>
<dbReference type="CCDS" id="CCDS32745.1">
    <molecule id="P84157-1"/>
</dbReference>
<dbReference type="CCDS" id="CCDS32746.1">
    <molecule id="P84157-3"/>
</dbReference>
<dbReference type="CCDS" id="CCDS45786.1">
    <molecule id="P84157-2"/>
</dbReference>
<dbReference type="RefSeq" id="NP_001008528.1">
    <molecule id="P84157-1"/>
    <property type="nucleotide sequence ID" value="NM_001008528.3"/>
</dbReference>
<dbReference type="RefSeq" id="NP_001008529.1">
    <molecule id="P84157-3"/>
    <property type="nucleotide sequence ID" value="NM_001008529.3"/>
</dbReference>
<dbReference type="RefSeq" id="NP_940932.2">
    <molecule id="P84157-2"/>
    <property type="nucleotide sequence ID" value="NM_198530.3"/>
</dbReference>
<dbReference type="SMR" id="P84157"/>
<dbReference type="BioGRID" id="136132">
    <property type="interactions" value="81"/>
</dbReference>
<dbReference type="FunCoup" id="P84157">
    <property type="interactions" value="44"/>
</dbReference>
<dbReference type="IntAct" id="P84157">
    <property type="interactions" value="14"/>
</dbReference>
<dbReference type="MINT" id="P84157"/>
<dbReference type="STRING" id="9606.ENSP00000465103"/>
<dbReference type="GlyGen" id="P84157">
    <property type="glycosylation" value="1 site, 1 O-linked glycan (1 site)"/>
</dbReference>
<dbReference type="iPTMnet" id="P84157"/>
<dbReference type="PhosphoSitePlus" id="P84157"/>
<dbReference type="BioMuta" id="MXRA7"/>
<dbReference type="DMDM" id="52783434"/>
<dbReference type="jPOST" id="P84157"/>
<dbReference type="MassIVE" id="P84157"/>
<dbReference type="PaxDb" id="9606-ENSP00000348050"/>
<dbReference type="PeptideAtlas" id="P84157"/>
<dbReference type="ProteomicsDB" id="57754">
    <molecule id="P84157-1"/>
</dbReference>
<dbReference type="ProteomicsDB" id="57755">
    <molecule id="P84157-2"/>
</dbReference>
<dbReference type="ProteomicsDB" id="57756">
    <molecule id="P84157-3"/>
</dbReference>
<dbReference type="Pumba" id="P84157"/>
<dbReference type="Antibodypedia" id="46164">
    <property type="antibodies" value="38 antibodies from 17 providers"/>
</dbReference>
<dbReference type="DNASU" id="439921"/>
<dbReference type="Ensembl" id="ENST00000355797.7">
    <molecule id="P84157-1"/>
    <property type="protein sequence ID" value="ENSP00000348050.2"/>
    <property type="gene ID" value="ENSG00000182534.14"/>
</dbReference>
<dbReference type="Ensembl" id="ENST00000375036.6">
    <molecule id="P84157-3"/>
    <property type="protein sequence ID" value="ENSP00000364176.1"/>
    <property type="gene ID" value="ENSG00000182534.14"/>
</dbReference>
<dbReference type="Ensembl" id="ENST00000449428.7">
    <molecule id="P84157-2"/>
    <property type="protein sequence ID" value="ENSP00000391466.1"/>
    <property type="gene ID" value="ENSG00000182534.14"/>
</dbReference>
<dbReference type="GeneID" id="439921"/>
<dbReference type="KEGG" id="hsa:439921"/>
<dbReference type="MANE-Select" id="ENST00000449428.7">
    <molecule id="P84157-2"/>
    <property type="protein sequence ID" value="ENSP00000391466.1"/>
    <property type="RefSeq nucleotide sequence ID" value="NM_198530.4"/>
    <property type="RefSeq protein sequence ID" value="NP_940932.2"/>
</dbReference>
<dbReference type="UCSC" id="uc002jsk.2">
    <molecule id="P84157-1"/>
    <property type="organism name" value="human"/>
</dbReference>
<dbReference type="AGR" id="HGNC:7541"/>
<dbReference type="CTD" id="439921"/>
<dbReference type="DisGeNET" id="439921"/>
<dbReference type="GeneCards" id="MXRA7"/>
<dbReference type="HGNC" id="HGNC:7541">
    <property type="gene designation" value="MXRA7"/>
</dbReference>
<dbReference type="HPA" id="ENSG00000182534">
    <property type="expression patterns" value="Low tissue specificity"/>
</dbReference>
<dbReference type="neXtProt" id="NX_P84157"/>
<dbReference type="OpenTargets" id="ENSG00000182534"/>
<dbReference type="PharmGKB" id="PA31342"/>
<dbReference type="VEuPathDB" id="HostDB:ENSG00000182534"/>
<dbReference type="eggNOG" id="ENOG502SAE0">
    <property type="taxonomic scope" value="Eukaryota"/>
</dbReference>
<dbReference type="GeneTree" id="ENSGT00940000165365"/>
<dbReference type="HOGENOM" id="CLU_117235_0_0_1"/>
<dbReference type="InParanoid" id="P84157"/>
<dbReference type="OMA" id="NGERPFF"/>
<dbReference type="OrthoDB" id="9486441at2759"/>
<dbReference type="PAN-GO" id="P84157">
    <property type="GO annotations" value="0 GO annotations based on evolutionary models"/>
</dbReference>
<dbReference type="PhylomeDB" id="P84157"/>
<dbReference type="TreeFam" id="TF336065"/>
<dbReference type="PathwayCommons" id="P84157"/>
<dbReference type="SignaLink" id="P84157"/>
<dbReference type="BioGRID-ORCS" id="439921">
    <property type="hits" value="77 hits in 1153 CRISPR screens"/>
</dbReference>
<dbReference type="ChiTaRS" id="MXRA7">
    <property type="organism name" value="human"/>
</dbReference>
<dbReference type="GenomeRNAi" id="439921"/>
<dbReference type="Pharos" id="P84157">
    <property type="development level" value="Tdark"/>
</dbReference>
<dbReference type="PRO" id="PR:P84157"/>
<dbReference type="Proteomes" id="UP000005640">
    <property type="component" value="Chromosome 17"/>
</dbReference>
<dbReference type="RNAct" id="P84157">
    <property type="molecule type" value="protein"/>
</dbReference>
<dbReference type="Bgee" id="ENSG00000182534">
    <property type="expression patterns" value="Expressed in saphenous vein and 218 other cell types or tissues"/>
</dbReference>
<dbReference type="ExpressionAtlas" id="P84157">
    <property type="expression patterns" value="baseline and differential"/>
</dbReference>
<dbReference type="GO" id="GO:0062023">
    <property type="term" value="C:collagen-containing extracellular matrix"/>
    <property type="evidence" value="ECO:0007005"/>
    <property type="project" value="BHF-UCL"/>
</dbReference>
<dbReference type="GO" id="GO:0005783">
    <property type="term" value="C:endoplasmic reticulum"/>
    <property type="evidence" value="ECO:0000314"/>
    <property type="project" value="HPA"/>
</dbReference>
<dbReference type="GO" id="GO:0016020">
    <property type="term" value="C:membrane"/>
    <property type="evidence" value="ECO:0007669"/>
    <property type="project" value="UniProtKB-SubCell"/>
</dbReference>
<dbReference type="InterPro" id="IPR026622">
    <property type="entry name" value="Mxra7"/>
</dbReference>
<dbReference type="PANTHER" id="PTHR21845:SF2">
    <property type="entry name" value="MATRIX-REMODELING-ASSOCIATED PROTEIN 7"/>
    <property type="match status" value="1"/>
</dbReference>
<dbReference type="PANTHER" id="PTHR21845">
    <property type="entry name" value="TRANSMEMBRANE ANCHOR PROTEIN 1"/>
    <property type="match status" value="1"/>
</dbReference>
<dbReference type="Pfam" id="PF25473">
    <property type="entry name" value="MXRA7_helical"/>
    <property type="match status" value="1"/>
</dbReference>
<sequence length="204" mass="21466">MEAPAELLAALPALATALALLLAWLLVRRGAAASPEPARAPPEPAPPAEATGAPAPSRPCAPEPAASPAGPEEPGEPAGLGELGEPAGPGEPEGPGDPAAAPAEAEEQAVEARQEEEQDLDGEKGPSSEGPEEEDGEGFSFKYSPGKLRGNQYKKMMTKEELEEEQRVQKEQLAAIFKLMKDNKETFGEMSDGDVQEQLRLYDM</sequence>
<gene>
    <name type="primary">MXRA7</name>
</gene>
<organism>
    <name type="scientific">Homo sapiens</name>
    <name type="common">Human</name>
    <dbReference type="NCBI Taxonomy" id="9606"/>
    <lineage>
        <taxon>Eukaryota</taxon>
        <taxon>Metazoa</taxon>
        <taxon>Chordata</taxon>
        <taxon>Craniata</taxon>
        <taxon>Vertebrata</taxon>
        <taxon>Euteleostomi</taxon>
        <taxon>Mammalia</taxon>
        <taxon>Eutheria</taxon>
        <taxon>Euarchontoglires</taxon>
        <taxon>Primates</taxon>
        <taxon>Haplorrhini</taxon>
        <taxon>Catarrhini</taxon>
        <taxon>Hominidae</taxon>
        <taxon>Homo</taxon>
    </lineage>
</organism>
<proteinExistence type="evidence at protein level"/>
<evidence type="ECO:0000250" key="1">
    <source>
        <dbReference type="UniProtKB" id="Q9CZH7"/>
    </source>
</evidence>
<evidence type="ECO:0000255" key="2"/>
<evidence type="ECO:0000256" key="3">
    <source>
        <dbReference type="SAM" id="MobiDB-lite"/>
    </source>
</evidence>
<evidence type="ECO:0000303" key="4">
    <source>
    </source>
</evidence>
<evidence type="ECO:0000303" key="5">
    <source ref="3"/>
</evidence>
<evidence type="ECO:0000305" key="6"/>
<feature type="chain" id="PRO_0000072586" description="Matrix-remodeling-associated protein 7">
    <location>
        <begin position="1"/>
        <end position="204"/>
    </location>
</feature>
<feature type="transmembrane region" description="Helical" evidence="2">
    <location>
        <begin position="7"/>
        <end position="27"/>
    </location>
</feature>
<feature type="region of interest" description="Disordered" evidence="3">
    <location>
        <begin position="32"/>
        <end position="148"/>
    </location>
</feature>
<feature type="compositionally biased region" description="Pro residues" evidence="3">
    <location>
        <begin position="38"/>
        <end position="47"/>
    </location>
</feature>
<feature type="compositionally biased region" description="Low complexity" evidence="3">
    <location>
        <begin position="63"/>
        <end position="103"/>
    </location>
</feature>
<feature type="compositionally biased region" description="Basic and acidic residues" evidence="3">
    <location>
        <begin position="110"/>
        <end position="126"/>
    </location>
</feature>
<feature type="modified residue" description="Phosphoserine" evidence="1">
    <location>
        <position position="191"/>
    </location>
</feature>
<feature type="splice variant" id="VSP_024252" description="In isoform 3." evidence="5">
    <original>VQKEQLAAIFKLMKDNKETFGEMSDGDVQEQLRLYDM</original>
    <variation>IELTSDLTSL</variation>
    <location>
        <begin position="168"/>
        <end position="204"/>
    </location>
</feature>
<feature type="splice variant" id="VSP_022589" description="In isoform 2." evidence="4">
    <original>VQK</original>
    <variation>TEE</variation>
    <location>
        <begin position="168"/>
        <end position="170"/>
    </location>
</feature>
<feature type="splice variant" id="VSP_022590" description="In isoform 2." evidence="4">
    <location>
        <begin position="171"/>
        <end position="204"/>
    </location>
</feature>
<feature type="sequence conflict" description="In Ref. 3." evidence="6" ref="3">
    <original>L</original>
    <variation>V</variation>
    <location>
        <position position="80"/>
    </location>
</feature>
<protein>
    <recommendedName>
        <fullName>Matrix-remodeling-associated protein 7</fullName>
    </recommendedName>
</protein>
<reference key="1">
    <citation type="journal article" date="2006" name="Nature">
        <title>DNA sequence of human chromosome 17 and analysis of rearrangement in the human lineage.</title>
        <authorList>
            <person name="Zody M.C."/>
            <person name="Garber M."/>
            <person name="Adams D.J."/>
            <person name="Sharpe T."/>
            <person name="Harrow J."/>
            <person name="Lupski J.R."/>
            <person name="Nicholson C."/>
            <person name="Searle S.M."/>
            <person name="Wilming L."/>
            <person name="Young S.K."/>
            <person name="Abouelleil A."/>
            <person name="Allen N.R."/>
            <person name="Bi W."/>
            <person name="Bloom T."/>
            <person name="Borowsky M.L."/>
            <person name="Bugalter B.E."/>
            <person name="Butler J."/>
            <person name="Chang J.L."/>
            <person name="Chen C.-K."/>
            <person name="Cook A."/>
            <person name="Corum B."/>
            <person name="Cuomo C.A."/>
            <person name="de Jong P.J."/>
            <person name="DeCaprio D."/>
            <person name="Dewar K."/>
            <person name="FitzGerald M."/>
            <person name="Gilbert J."/>
            <person name="Gibson R."/>
            <person name="Gnerre S."/>
            <person name="Goldstein S."/>
            <person name="Grafham D.V."/>
            <person name="Grocock R."/>
            <person name="Hafez N."/>
            <person name="Hagopian D.S."/>
            <person name="Hart E."/>
            <person name="Norman C.H."/>
            <person name="Humphray S."/>
            <person name="Jaffe D.B."/>
            <person name="Jones M."/>
            <person name="Kamal M."/>
            <person name="Khodiyar V.K."/>
            <person name="LaButti K."/>
            <person name="Laird G."/>
            <person name="Lehoczky J."/>
            <person name="Liu X."/>
            <person name="Lokyitsang T."/>
            <person name="Loveland J."/>
            <person name="Lui A."/>
            <person name="Macdonald P."/>
            <person name="Major J.E."/>
            <person name="Matthews L."/>
            <person name="Mauceli E."/>
            <person name="McCarroll S.A."/>
            <person name="Mihalev A.H."/>
            <person name="Mudge J."/>
            <person name="Nguyen C."/>
            <person name="Nicol R."/>
            <person name="O'Leary S.B."/>
            <person name="Osoegawa K."/>
            <person name="Schwartz D.C."/>
            <person name="Shaw-Smith C."/>
            <person name="Stankiewicz P."/>
            <person name="Steward C."/>
            <person name="Swarbreck D."/>
            <person name="Venkataraman V."/>
            <person name="Whittaker C.A."/>
            <person name="Yang X."/>
            <person name="Zimmer A.R."/>
            <person name="Bradley A."/>
            <person name="Hubbard T."/>
            <person name="Birren B.W."/>
            <person name="Rogers J."/>
            <person name="Lander E.S."/>
            <person name="Nusbaum C."/>
        </authorList>
    </citation>
    <scope>NUCLEOTIDE SEQUENCE [LARGE SCALE GENOMIC DNA]</scope>
</reference>
<reference evidence="6" key="2">
    <citation type="journal article" date="2004" name="Genome Res.">
        <title>The status, quality, and expansion of the NIH full-length cDNA project: the Mammalian Gene Collection (MGC).</title>
        <authorList>
            <consortium name="The MGC Project Team"/>
        </authorList>
    </citation>
    <scope>NUCLEOTIDE SEQUENCE [LARGE SCALE MRNA] (ISOFORM 2)</scope>
    <source>
        <tissue>Skin</tissue>
    </source>
</reference>
<reference evidence="6" key="3">
    <citation type="submission" date="2000-05" db="EMBL/GenBank/DDBJ databases">
        <title>Matrix-remodeling associated genes identified by co-expression.</title>
        <authorList>
            <person name="Walker M.G."/>
            <person name="Volkmuth W."/>
        </authorList>
    </citation>
    <scope>NUCLEOTIDE SEQUENCE [MRNA] OF 75-204 (ISOFORM 3)</scope>
</reference>
<reference evidence="6" key="4">
    <citation type="submission" date="2004-08" db="UniProtKB">
        <title>Characterising unknown proteins by location proteomics.</title>
        <authorList>
            <person name="Southan C."/>
            <person name="Hearath A."/>
            <person name="Rohlff C."/>
        </authorList>
    </citation>
    <scope>IDENTIFICATION</scope>
</reference>
<reference key="5">
    <citation type="journal article" date="2008" name="Proc. Natl. Acad. Sci. U.S.A.">
        <title>A quantitative atlas of mitotic phosphorylation.</title>
        <authorList>
            <person name="Dephoure N."/>
            <person name="Zhou C."/>
            <person name="Villen J."/>
            <person name="Beausoleil S.A."/>
            <person name="Bakalarski C.E."/>
            <person name="Elledge S.J."/>
            <person name="Gygi S.P."/>
        </authorList>
    </citation>
    <scope>IDENTIFICATION BY MASS SPECTROMETRY [LARGE SCALE ANALYSIS]</scope>
    <source>
        <tissue>Cervix carcinoma</tissue>
    </source>
</reference>
<reference key="6">
    <citation type="journal article" date="2009" name="Anal. Chem.">
        <title>Lys-N and trypsin cover complementary parts of the phosphoproteome in a refined SCX-based approach.</title>
        <authorList>
            <person name="Gauci S."/>
            <person name="Helbig A.O."/>
            <person name="Slijper M."/>
            <person name="Krijgsveld J."/>
            <person name="Heck A.J."/>
            <person name="Mohammed S."/>
        </authorList>
    </citation>
    <scope>IDENTIFICATION BY MASS SPECTROMETRY [LARGE SCALE ANALYSIS]</scope>
</reference>
<reference key="7">
    <citation type="journal article" date="2011" name="BMC Syst. Biol.">
        <title>Initial characterization of the human central proteome.</title>
        <authorList>
            <person name="Burkard T.R."/>
            <person name="Planyavsky M."/>
            <person name="Kaupe I."/>
            <person name="Breitwieser F.P."/>
            <person name="Buerckstuemmer T."/>
            <person name="Bennett K.L."/>
            <person name="Superti-Furga G."/>
            <person name="Colinge J."/>
        </authorList>
    </citation>
    <scope>IDENTIFICATION BY MASS SPECTROMETRY [LARGE SCALE ANALYSIS]</scope>
</reference>
<reference key="8">
    <citation type="journal article" date="2013" name="J. Proteome Res.">
        <title>Toward a comprehensive characterization of a human cancer cell phosphoproteome.</title>
        <authorList>
            <person name="Zhou H."/>
            <person name="Di Palma S."/>
            <person name="Preisinger C."/>
            <person name="Peng M."/>
            <person name="Polat A.N."/>
            <person name="Heck A.J."/>
            <person name="Mohammed S."/>
        </authorList>
    </citation>
    <scope>IDENTIFICATION BY MASS SPECTROMETRY [LARGE SCALE ANALYSIS]</scope>
    <source>
        <tissue>Cervix carcinoma</tissue>
        <tissue>Erythroleukemia</tissue>
    </source>
</reference>
<keyword id="KW-0025">Alternative splicing</keyword>
<keyword id="KW-0472">Membrane</keyword>
<keyword id="KW-0597">Phosphoprotein</keyword>
<keyword id="KW-1267">Proteomics identification</keyword>
<keyword id="KW-1185">Reference proteome</keyword>
<keyword id="KW-0812">Transmembrane</keyword>
<keyword id="KW-1133">Transmembrane helix</keyword>
<name>MXRA7_HUMAN</name>